<protein>
    <recommendedName>
        <fullName evidence="1">NAD(P)H dehydrogenase (quinone)</fullName>
        <ecNumber evidence="1">1.6.5.2</ecNumber>
    </recommendedName>
    <alternativeName>
        <fullName>Flavoprotein WrbA</fullName>
    </alternativeName>
    <alternativeName>
        <fullName evidence="1">NAD(P)H:quinone oxidoreductase</fullName>
        <shortName evidence="1">NQO</shortName>
    </alternativeName>
</protein>
<dbReference type="EC" id="1.6.5.2" evidence="1"/>
<dbReference type="EMBL" id="CP000964">
    <property type="protein sequence ID" value="ACI07603.1"/>
    <property type="molecule type" value="Genomic_DNA"/>
</dbReference>
<dbReference type="SMR" id="B5XXP0"/>
<dbReference type="KEGG" id="kpe:KPK_3530"/>
<dbReference type="HOGENOM" id="CLU_051402_0_2_6"/>
<dbReference type="BioCyc" id="KPNE507522:GI0B-3513-MONOMER"/>
<dbReference type="Proteomes" id="UP000001734">
    <property type="component" value="Chromosome"/>
</dbReference>
<dbReference type="GO" id="GO:0016020">
    <property type="term" value="C:membrane"/>
    <property type="evidence" value="ECO:0007669"/>
    <property type="project" value="TreeGrafter"/>
</dbReference>
<dbReference type="GO" id="GO:0050660">
    <property type="term" value="F:flavin adenine dinucleotide binding"/>
    <property type="evidence" value="ECO:0007669"/>
    <property type="project" value="UniProtKB-UniRule"/>
</dbReference>
<dbReference type="GO" id="GO:0010181">
    <property type="term" value="F:FMN binding"/>
    <property type="evidence" value="ECO:0007669"/>
    <property type="project" value="InterPro"/>
</dbReference>
<dbReference type="GO" id="GO:0051287">
    <property type="term" value="F:NAD binding"/>
    <property type="evidence" value="ECO:0007669"/>
    <property type="project" value="UniProtKB-UniRule"/>
</dbReference>
<dbReference type="GO" id="GO:0050136">
    <property type="term" value="F:NADH:ubiquinone reductase (non-electrogenic) activity"/>
    <property type="evidence" value="ECO:0007669"/>
    <property type="project" value="RHEA"/>
</dbReference>
<dbReference type="GO" id="GO:0050661">
    <property type="term" value="F:NADP binding"/>
    <property type="evidence" value="ECO:0007669"/>
    <property type="project" value="UniProtKB-UniRule"/>
</dbReference>
<dbReference type="GO" id="GO:0008753">
    <property type="term" value="F:NADPH dehydrogenase (quinone) activity"/>
    <property type="evidence" value="ECO:0007669"/>
    <property type="project" value="RHEA"/>
</dbReference>
<dbReference type="FunFam" id="3.40.50.360:FF:000004">
    <property type="entry name" value="NAD(P)H dehydrogenase (quinone)"/>
    <property type="match status" value="1"/>
</dbReference>
<dbReference type="Gene3D" id="3.40.50.360">
    <property type="match status" value="1"/>
</dbReference>
<dbReference type="HAMAP" id="MF_01017">
    <property type="entry name" value="NQOR"/>
    <property type="match status" value="1"/>
</dbReference>
<dbReference type="InterPro" id="IPR008254">
    <property type="entry name" value="Flavodoxin/NO_synth"/>
</dbReference>
<dbReference type="InterPro" id="IPR029039">
    <property type="entry name" value="Flavoprotein-like_sf"/>
</dbReference>
<dbReference type="InterPro" id="IPR010089">
    <property type="entry name" value="Flavoprotein_WrbA-like"/>
</dbReference>
<dbReference type="InterPro" id="IPR005025">
    <property type="entry name" value="FMN_Rdtase-like_dom"/>
</dbReference>
<dbReference type="InterPro" id="IPR037513">
    <property type="entry name" value="NQO"/>
</dbReference>
<dbReference type="NCBIfam" id="TIGR01755">
    <property type="entry name" value="flav_wrbA"/>
    <property type="match status" value="1"/>
</dbReference>
<dbReference type="NCBIfam" id="NF002999">
    <property type="entry name" value="PRK03767.1"/>
    <property type="match status" value="1"/>
</dbReference>
<dbReference type="PANTHER" id="PTHR30546">
    <property type="entry name" value="FLAVODOXIN-RELATED PROTEIN WRBA-RELATED"/>
    <property type="match status" value="1"/>
</dbReference>
<dbReference type="PANTHER" id="PTHR30546:SF23">
    <property type="entry name" value="FLAVOPROTEIN-LIKE PROTEIN YCP4-RELATED"/>
    <property type="match status" value="1"/>
</dbReference>
<dbReference type="Pfam" id="PF03358">
    <property type="entry name" value="FMN_red"/>
    <property type="match status" value="1"/>
</dbReference>
<dbReference type="SUPFAM" id="SSF52218">
    <property type="entry name" value="Flavoproteins"/>
    <property type="match status" value="1"/>
</dbReference>
<dbReference type="PROSITE" id="PS50902">
    <property type="entry name" value="FLAVODOXIN_LIKE"/>
    <property type="match status" value="1"/>
</dbReference>
<sequence length="198" mass="20896">MAKILVLYYSMYGHIETMAHAVADGANRVDGVEVVVKRVPETMQAEAFAKAGGKTQNAPVATPQELAEYDAIIFGTPTRFGNMSGQMRTFLDQTGGLWASGALYGKIASVFSSTGTGGGQEQTITSTWTTLAHHGMIIVPIGYGAQELFDISQVRGGTPYGATTIAGGDGSRQPSEEELAIARYQGEHVAKLAVKVHG</sequence>
<evidence type="ECO:0000255" key="1">
    <source>
        <dbReference type="HAMAP-Rule" id="MF_01017"/>
    </source>
</evidence>
<organism>
    <name type="scientific">Klebsiella pneumoniae (strain 342)</name>
    <dbReference type="NCBI Taxonomy" id="507522"/>
    <lineage>
        <taxon>Bacteria</taxon>
        <taxon>Pseudomonadati</taxon>
        <taxon>Pseudomonadota</taxon>
        <taxon>Gammaproteobacteria</taxon>
        <taxon>Enterobacterales</taxon>
        <taxon>Enterobacteriaceae</taxon>
        <taxon>Klebsiella/Raoultella group</taxon>
        <taxon>Klebsiella</taxon>
        <taxon>Klebsiella pneumoniae complex</taxon>
    </lineage>
</organism>
<comment type="catalytic activity">
    <reaction evidence="1">
        <text>a quinone + NADH + H(+) = a quinol + NAD(+)</text>
        <dbReference type="Rhea" id="RHEA:46160"/>
        <dbReference type="ChEBI" id="CHEBI:15378"/>
        <dbReference type="ChEBI" id="CHEBI:24646"/>
        <dbReference type="ChEBI" id="CHEBI:57540"/>
        <dbReference type="ChEBI" id="CHEBI:57945"/>
        <dbReference type="ChEBI" id="CHEBI:132124"/>
        <dbReference type="EC" id="1.6.5.2"/>
    </reaction>
</comment>
<comment type="catalytic activity">
    <reaction evidence="1">
        <text>a quinone + NADPH + H(+) = a quinol + NADP(+)</text>
        <dbReference type="Rhea" id="RHEA:46164"/>
        <dbReference type="ChEBI" id="CHEBI:15378"/>
        <dbReference type="ChEBI" id="CHEBI:24646"/>
        <dbReference type="ChEBI" id="CHEBI:57783"/>
        <dbReference type="ChEBI" id="CHEBI:58349"/>
        <dbReference type="ChEBI" id="CHEBI:132124"/>
        <dbReference type="EC" id="1.6.5.2"/>
    </reaction>
</comment>
<comment type="cofactor">
    <cofactor evidence="1">
        <name>FMN</name>
        <dbReference type="ChEBI" id="CHEBI:58210"/>
    </cofactor>
    <text evidence="1">Binds 1 FMN per monomer.</text>
</comment>
<comment type="similarity">
    <text evidence="1">Belongs to the WrbA family.</text>
</comment>
<reference key="1">
    <citation type="journal article" date="2008" name="PLoS Genet.">
        <title>Complete genome sequence of the N2-fixing broad host range endophyte Klebsiella pneumoniae 342 and virulence predictions verified in mice.</title>
        <authorList>
            <person name="Fouts D.E."/>
            <person name="Tyler H.L."/>
            <person name="DeBoy R.T."/>
            <person name="Daugherty S."/>
            <person name="Ren Q."/>
            <person name="Badger J.H."/>
            <person name="Durkin A.S."/>
            <person name="Huot H."/>
            <person name="Shrivastava S."/>
            <person name="Kothari S."/>
            <person name="Dodson R.J."/>
            <person name="Mohamoud Y."/>
            <person name="Khouri H."/>
            <person name="Roesch L.F.W."/>
            <person name="Krogfelt K.A."/>
            <person name="Struve C."/>
            <person name="Triplett E.W."/>
            <person name="Methe B.A."/>
        </authorList>
    </citation>
    <scope>NUCLEOTIDE SEQUENCE [LARGE SCALE GENOMIC DNA]</scope>
    <source>
        <strain>342</strain>
    </source>
</reference>
<keyword id="KW-0285">Flavoprotein</keyword>
<keyword id="KW-0288">FMN</keyword>
<keyword id="KW-0520">NAD</keyword>
<keyword id="KW-0521">NADP</keyword>
<keyword id="KW-0547">Nucleotide-binding</keyword>
<keyword id="KW-0560">Oxidoreductase</keyword>
<name>NQOR_KLEP3</name>
<feature type="chain" id="PRO_1000200632" description="NAD(P)H dehydrogenase (quinone)">
    <location>
        <begin position="1"/>
        <end position="198"/>
    </location>
</feature>
<feature type="domain" description="Flavodoxin-like" evidence="1">
    <location>
        <begin position="4"/>
        <end position="189"/>
    </location>
</feature>
<feature type="binding site" evidence="1">
    <location>
        <begin position="10"/>
        <end position="15"/>
    </location>
    <ligand>
        <name>FMN</name>
        <dbReference type="ChEBI" id="CHEBI:58210"/>
    </ligand>
</feature>
<feature type="binding site" evidence="1">
    <location>
        <position position="12"/>
    </location>
    <ligand>
        <name>NAD(+)</name>
        <dbReference type="ChEBI" id="CHEBI:57540"/>
    </ligand>
</feature>
<feature type="binding site" evidence="1">
    <location>
        <begin position="78"/>
        <end position="80"/>
    </location>
    <ligand>
        <name>FMN</name>
        <dbReference type="ChEBI" id="CHEBI:58210"/>
    </ligand>
</feature>
<feature type="binding site" evidence="1">
    <location>
        <position position="98"/>
    </location>
    <ligand>
        <name>substrate</name>
    </ligand>
</feature>
<feature type="binding site" evidence="1">
    <location>
        <begin position="113"/>
        <end position="118"/>
    </location>
    <ligand>
        <name>FMN</name>
        <dbReference type="ChEBI" id="CHEBI:58210"/>
    </ligand>
</feature>
<feature type="binding site" evidence="1">
    <location>
        <position position="133"/>
    </location>
    <ligand>
        <name>FMN</name>
        <dbReference type="ChEBI" id="CHEBI:58210"/>
    </ligand>
</feature>
<gene>
    <name type="ordered locus">KPK_3530</name>
</gene>
<accession>B5XXP0</accession>
<proteinExistence type="inferred from homology"/>